<gene>
    <name evidence="1" type="primary">pckA</name>
    <name type="ordered locus">Rxyl_0680</name>
</gene>
<comment type="function">
    <text evidence="1">Involved in the gluconeogenesis. Catalyzes the conversion of oxaloacetate (OAA) to phosphoenolpyruvate (PEP) through direct phosphoryl transfer between the nucleoside triphosphate and OAA.</text>
</comment>
<comment type="catalytic activity">
    <reaction evidence="1">
        <text>oxaloacetate + ATP = phosphoenolpyruvate + ADP + CO2</text>
        <dbReference type="Rhea" id="RHEA:18617"/>
        <dbReference type="ChEBI" id="CHEBI:16452"/>
        <dbReference type="ChEBI" id="CHEBI:16526"/>
        <dbReference type="ChEBI" id="CHEBI:30616"/>
        <dbReference type="ChEBI" id="CHEBI:58702"/>
        <dbReference type="ChEBI" id="CHEBI:456216"/>
        <dbReference type="EC" id="4.1.1.49"/>
    </reaction>
</comment>
<comment type="cofactor">
    <cofactor evidence="1">
        <name>Mn(2+)</name>
        <dbReference type="ChEBI" id="CHEBI:29035"/>
    </cofactor>
    <text evidence="1">Binds 1 Mn(2+) ion per subunit.</text>
</comment>
<comment type="pathway">
    <text evidence="1">Carbohydrate biosynthesis; gluconeogenesis.</text>
</comment>
<comment type="subcellular location">
    <subcellularLocation>
        <location evidence="1">Cytoplasm</location>
    </subcellularLocation>
</comment>
<comment type="similarity">
    <text evidence="1">Belongs to the phosphoenolpyruvate carboxykinase (ATP) family.</text>
</comment>
<keyword id="KW-0067">ATP-binding</keyword>
<keyword id="KW-0963">Cytoplasm</keyword>
<keyword id="KW-0210">Decarboxylase</keyword>
<keyword id="KW-0312">Gluconeogenesis</keyword>
<keyword id="KW-0456">Lyase</keyword>
<keyword id="KW-0464">Manganese</keyword>
<keyword id="KW-0479">Metal-binding</keyword>
<keyword id="KW-0547">Nucleotide-binding</keyword>
<keyword id="KW-1185">Reference proteome</keyword>
<organism>
    <name type="scientific">Rubrobacter xylanophilus (strain DSM 9941 / JCM 11954 / NBRC 16129 / PRD-1)</name>
    <dbReference type="NCBI Taxonomy" id="266117"/>
    <lineage>
        <taxon>Bacteria</taxon>
        <taxon>Bacillati</taxon>
        <taxon>Actinomycetota</taxon>
        <taxon>Rubrobacteria</taxon>
        <taxon>Rubrobacterales</taxon>
        <taxon>Rubrobacteraceae</taxon>
        <taxon>Rubrobacter</taxon>
    </lineage>
</organism>
<sequence>MDLAVRKMTLEGLGVSQLGAVHENLPPARLVEASVRRREGMLAENGALVCLTGKRTGRSPKDRFIVENGLTRGPVDWGPVNKPFPGERFERLLAKASAYLENLEEVYVVDAYAGADPRYRLNVQVVCEYAWQALFTRQLFRRPSREELDAFEPDWTVISVPGLLTDPEEDGTESETFVGIDFGRRVVLICGTRYAGEIKKSIFSVLNFVLPTEHGVFPMHCSANVGPGGDVALFFGLSGTGKTTLSSDPERYLIGDDEHGWSDEGIFNFEGGCYAKCIDLSREKEPQIYDAIRFGAVLENVVVDRITRRVDYSDASLTENTRAAYPLEYIEGAVDSGRAGHPAAVLFLTADAFGVLPPISVLSPEQAAYYFLSGYTAKLAGTEADMEADVEATFSACFGAPFLPLPATTYAAMLSEKLREHGSRCYLINTGWSGGPYGVGERVDIAATRQMVRAVIAGNIDESKTYTDPFFGLQVPLEVPGVPSGILNPRETWADRAAYDDQAAKLADLFRENFKKFEDGVPEGVRKAGPNV</sequence>
<name>PCKA_RUBXD</name>
<feature type="chain" id="PRO_1000060308" description="Phosphoenolpyruvate carboxykinase (ATP)">
    <location>
        <begin position="1"/>
        <end position="532"/>
    </location>
</feature>
<feature type="binding site" evidence="1">
    <location>
        <position position="58"/>
    </location>
    <ligand>
        <name>substrate</name>
    </ligand>
</feature>
<feature type="binding site" evidence="1">
    <location>
        <position position="194"/>
    </location>
    <ligand>
        <name>substrate</name>
    </ligand>
</feature>
<feature type="binding site" evidence="1">
    <location>
        <position position="200"/>
    </location>
    <ligand>
        <name>ATP</name>
        <dbReference type="ChEBI" id="CHEBI:30616"/>
    </ligand>
</feature>
<feature type="binding site" evidence="1">
    <location>
        <position position="200"/>
    </location>
    <ligand>
        <name>Mn(2+)</name>
        <dbReference type="ChEBI" id="CHEBI:29035"/>
    </ligand>
</feature>
<feature type="binding site" evidence="1">
    <location>
        <position position="200"/>
    </location>
    <ligand>
        <name>substrate</name>
    </ligand>
</feature>
<feature type="binding site" evidence="1">
    <location>
        <position position="220"/>
    </location>
    <ligand>
        <name>ATP</name>
        <dbReference type="ChEBI" id="CHEBI:30616"/>
    </ligand>
</feature>
<feature type="binding site" evidence="1">
    <location>
        <position position="220"/>
    </location>
    <ligand>
        <name>Mn(2+)</name>
        <dbReference type="ChEBI" id="CHEBI:29035"/>
    </ligand>
</feature>
<feature type="binding site" evidence="1">
    <location>
        <begin position="236"/>
        <end position="244"/>
    </location>
    <ligand>
        <name>ATP</name>
        <dbReference type="ChEBI" id="CHEBI:30616"/>
    </ligand>
</feature>
<feature type="binding site" evidence="1">
    <location>
        <position position="257"/>
    </location>
    <ligand>
        <name>Mn(2+)</name>
        <dbReference type="ChEBI" id="CHEBI:29035"/>
    </ligand>
</feature>
<feature type="binding site" evidence="1">
    <location>
        <position position="285"/>
    </location>
    <ligand>
        <name>ATP</name>
        <dbReference type="ChEBI" id="CHEBI:30616"/>
    </ligand>
</feature>
<feature type="binding site" evidence="1">
    <location>
        <position position="322"/>
    </location>
    <ligand>
        <name>ATP</name>
        <dbReference type="ChEBI" id="CHEBI:30616"/>
    </ligand>
</feature>
<feature type="binding site" evidence="1">
    <location>
        <position position="322"/>
    </location>
    <ligand>
        <name>substrate</name>
    </ligand>
</feature>
<feature type="binding site" evidence="1">
    <location>
        <begin position="442"/>
        <end position="443"/>
    </location>
    <ligand>
        <name>ATP</name>
        <dbReference type="ChEBI" id="CHEBI:30616"/>
    </ligand>
</feature>
<feature type="binding site" evidence="1">
    <location>
        <position position="448"/>
    </location>
    <ligand>
        <name>ATP</name>
        <dbReference type="ChEBI" id="CHEBI:30616"/>
    </ligand>
</feature>
<evidence type="ECO:0000255" key="1">
    <source>
        <dbReference type="HAMAP-Rule" id="MF_00453"/>
    </source>
</evidence>
<protein>
    <recommendedName>
        <fullName evidence="1">Phosphoenolpyruvate carboxykinase (ATP)</fullName>
        <shortName evidence="1">PCK</shortName>
        <shortName evidence="1">PEP carboxykinase</shortName>
        <shortName evidence="1">PEPCK</shortName>
        <ecNumber evidence="1">4.1.1.49</ecNumber>
    </recommendedName>
</protein>
<proteinExistence type="inferred from homology"/>
<accession>Q1AY78</accession>
<reference key="1">
    <citation type="submission" date="2006-06" db="EMBL/GenBank/DDBJ databases">
        <title>Complete sequence of Rubrobacter xylanophilus DSM 9941.</title>
        <authorList>
            <consortium name="US DOE Joint Genome Institute"/>
            <person name="Copeland A."/>
            <person name="Lucas S."/>
            <person name="Lapidus A."/>
            <person name="Barry K."/>
            <person name="Detter J.C."/>
            <person name="Glavina del Rio T."/>
            <person name="Hammon N."/>
            <person name="Israni S."/>
            <person name="Dalin E."/>
            <person name="Tice H."/>
            <person name="Pitluck S."/>
            <person name="Munk A.C."/>
            <person name="Brettin T."/>
            <person name="Bruce D."/>
            <person name="Han C."/>
            <person name="Tapia R."/>
            <person name="Gilna P."/>
            <person name="Schmutz J."/>
            <person name="Larimer F."/>
            <person name="Land M."/>
            <person name="Hauser L."/>
            <person name="Kyrpides N."/>
            <person name="Lykidis A."/>
            <person name="da Costa M.S."/>
            <person name="Rainey F.A."/>
            <person name="Empadinhas N."/>
            <person name="Jolivet E."/>
            <person name="Battista J.R."/>
            <person name="Richardson P."/>
        </authorList>
    </citation>
    <scope>NUCLEOTIDE SEQUENCE [LARGE SCALE GENOMIC DNA]</scope>
    <source>
        <strain>DSM 9941 / JCM 11954 / NBRC 16129 / PRD-1</strain>
    </source>
</reference>
<dbReference type="EC" id="4.1.1.49" evidence="1"/>
<dbReference type="EMBL" id="CP000386">
    <property type="protein sequence ID" value="ABG03650.1"/>
    <property type="molecule type" value="Genomic_DNA"/>
</dbReference>
<dbReference type="RefSeq" id="WP_011563668.1">
    <property type="nucleotide sequence ID" value="NC_008148.1"/>
</dbReference>
<dbReference type="SMR" id="Q1AY78"/>
<dbReference type="STRING" id="266117.Rxyl_0680"/>
<dbReference type="KEGG" id="rxy:Rxyl_0680"/>
<dbReference type="eggNOG" id="COG1866">
    <property type="taxonomic scope" value="Bacteria"/>
</dbReference>
<dbReference type="HOGENOM" id="CLU_018247_0_1_11"/>
<dbReference type="OrthoDB" id="9806325at2"/>
<dbReference type="PhylomeDB" id="Q1AY78"/>
<dbReference type="UniPathway" id="UPA00138"/>
<dbReference type="Proteomes" id="UP000006637">
    <property type="component" value="Chromosome"/>
</dbReference>
<dbReference type="GO" id="GO:0005829">
    <property type="term" value="C:cytosol"/>
    <property type="evidence" value="ECO:0007669"/>
    <property type="project" value="TreeGrafter"/>
</dbReference>
<dbReference type="GO" id="GO:0005524">
    <property type="term" value="F:ATP binding"/>
    <property type="evidence" value="ECO:0007669"/>
    <property type="project" value="UniProtKB-UniRule"/>
</dbReference>
<dbReference type="GO" id="GO:0046872">
    <property type="term" value="F:metal ion binding"/>
    <property type="evidence" value="ECO:0007669"/>
    <property type="project" value="UniProtKB-KW"/>
</dbReference>
<dbReference type="GO" id="GO:0004612">
    <property type="term" value="F:phosphoenolpyruvate carboxykinase (ATP) activity"/>
    <property type="evidence" value="ECO:0007669"/>
    <property type="project" value="UniProtKB-UniRule"/>
</dbReference>
<dbReference type="GO" id="GO:0006094">
    <property type="term" value="P:gluconeogenesis"/>
    <property type="evidence" value="ECO:0007669"/>
    <property type="project" value="UniProtKB-UniRule"/>
</dbReference>
<dbReference type="CDD" id="cd00484">
    <property type="entry name" value="PEPCK_ATP"/>
    <property type="match status" value="1"/>
</dbReference>
<dbReference type="FunFam" id="2.170.8.10:FF:000001">
    <property type="entry name" value="Phosphoenolpyruvate carboxykinase (ATP)"/>
    <property type="match status" value="1"/>
</dbReference>
<dbReference type="Gene3D" id="3.90.228.20">
    <property type="match status" value="1"/>
</dbReference>
<dbReference type="Gene3D" id="3.40.449.10">
    <property type="entry name" value="Phosphoenolpyruvate Carboxykinase, domain 1"/>
    <property type="match status" value="1"/>
</dbReference>
<dbReference type="Gene3D" id="2.170.8.10">
    <property type="entry name" value="Phosphoenolpyruvate Carboxykinase, domain 2"/>
    <property type="match status" value="1"/>
</dbReference>
<dbReference type="HAMAP" id="MF_00453">
    <property type="entry name" value="PEPCK_ATP"/>
    <property type="match status" value="1"/>
</dbReference>
<dbReference type="InterPro" id="IPR001272">
    <property type="entry name" value="PEP_carboxykinase_ATP"/>
</dbReference>
<dbReference type="InterPro" id="IPR013035">
    <property type="entry name" value="PEP_carboxykinase_C"/>
</dbReference>
<dbReference type="InterPro" id="IPR008210">
    <property type="entry name" value="PEP_carboxykinase_N"/>
</dbReference>
<dbReference type="InterPro" id="IPR015994">
    <property type="entry name" value="PEPCK_ATP_CS"/>
</dbReference>
<dbReference type="NCBIfam" id="TIGR00224">
    <property type="entry name" value="pckA"/>
    <property type="match status" value="1"/>
</dbReference>
<dbReference type="NCBIfam" id="NF006820">
    <property type="entry name" value="PRK09344.1-2"/>
    <property type="match status" value="1"/>
</dbReference>
<dbReference type="NCBIfam" id="NF006821">
    <property type="entry name" value="PRK09344.1-3"/>
    <property type="match status" value="1"/>
</dbReference>
<dbReference type="PANTHER" id="PTHR30031:SF0">
    <property type="entry name" value="PHOSPHOENOLPYRUVATE CARBOXYKINASE (ATP)"/>
    <property type="match status" value="1"/>
</dbReference>
<dbReference type="PANTHER" id="PTHR30031">
    <property type="entry name" value="PHOSPHOENOLPYRUVATE CARBOXYKINASE ATP"/>
    <property type="match status" value="1"/>
</dbReference>
<dbReference type="Pfam" id="PF01293">
    <property type="entry name" value="PEPCK_ATP"/>
    <property type="match status" value="1"/>
</dbReference>
<dbReference type="PIRSF" id="PIRSF006294">
    <property type="entry name" value="PEP_crbxkin"/>
    <property type="match status" value="1"/>
</dbReference>
<dbReference type="SUPFAM" id="SSF68923">
    <property type="entry name" value="PEP carboxykinase N-terminal domain"/>
    <property type="match status" value="1"/>
</dbReference>
<dbReference type="SUPFAM" id="SSF53795">
    <property type="entry name" value="PEP carboxykinase-like"/>
    <property type="match status" value="1"/>
</dbReference>
<dbReference type="PROSITE" id="PS00532">
    <property type="entry name" value="PEPCK_ATP"/>
    <property type="match status" value="1"/>
</dbReference>